<proteinExistence type="predicted"/>
<feature type="chain" id="PRO_0000116810" description="Uncharacterized protein C553.01c">
    <location>
        <begin position="1"/>
        <end position="715"/>
    </location>
</feature>
<feature type="region of interest" description="Disordered" evidence="1">
    <location>
        <begin position="192"/>
        <end position="216"/>
    </location>
</feature>
<feature type="region of interest" description="Disordered" evidence="1">
    <location>
        <begin position="300"/>
        <end position="348"/>
    </location>
</feature>
<feature type="region of interest" description="Disordered" evidence="1">
    <location>
        <begin position="461"/>
        <end position="481"/>
    </location>
</feature>
<feature type="region of interest" description="Disordered" evidence="1">
    <location>
        <begin position="580"/>
        <end position="630"/>
    </location>
</feature>
<feature type="compositionally biased region" description="Low complexity" evidence="1">
    <location>
        <begin position="202"/>
        <end position="213"/>
    </location>
</feature>
<feature type="compositionally biased region" description="Polar residues" evidence="1">
    <location>
        <begin position="301"/>
        <end position="326"/>
    </location>
</feature>
<feature type="compositionally biased region" description="Polar residues" evidence="1">
    <location>
        <begin position="472"/>
        <end position="481"/>
    </location>
</feature>
<feature type="compositionally biased region" description="Low complexity" evidence="1">
    <location>
        <begin position="601"/>
        <end position="614"/>
    </location>
</feature>
<keyword id="KW-1185">Reference proteome</keyword>
<name>YJB1_SCHPO</name>
<accession>O74939</accession>
<accession>O74950</accession>
<sequence>MDTSSNVFHYQVLWTSDKAKKVKVWKDGTMRFHSFNNRGILYDSDNRVVDDFFLNNKRIVLDSEIEFNRTIVYVENLQTTTEANIPPIPRKSKLSETGKRPAYLLKPFQPPFHSANSDVSNNSNGALSSNMLKTHAHHTNSTKSTIFRNANLQSYGVDDSDIGSLRCSSKHQLSVTPEIQPKAKFRPNSYLASSVEESNRANNTSPYPPSNSSVTALPKPSKIAYIPVLSKPKSFNGTLVEDPVEEFGEDDIASDFFSSPSADLEADDFTTLNNSNAGHLLQNLSNDNVSVSVKALENGNEEVSNNHARSPHSSRACNTIPSNKNDGLNDDHQRQDSSVAEPSPTSKRLRLTRLPLPLLRKPTGKRQNFINITVTDPSKNLYERSVKTAAELASLQNVTETTDNEIPNSPDFLDAASEEDEHIPSLDSSSLLTPLALPNKKAFQPVKFRVPSFSSPLVKPASSSSFGRSHSHLGTSLRSNELNGSSASSSIFLQSNNAVNPNVSPSTVLEHAKHPSLAKHSGVSLRTGLLIYPKYANGSKRKDGFGATSIISSGEHSSLPKNSKSRNVSVFSSPFNVPSFTVSSSDQVQKKKGNVPNAIETDSSPSDTISSSPTVRAVNLSPSKNQKPPKILTKIPDIFSKAGKKSPILPTFQESCSLPIEPFSSNITDLPFVNTVTLASTSSKIKRAKLKMLKFKHAMTTQGRDLDSDEDGDFI</sequence>
<dbReference type="EMBL" id="CU329672">
    <property type="protein sequence ID" value="CAA19254.4"/>
    <property type="molecule type" value="Genomic_DNA"/>
</dbReference>
<dbReference type="PIR" id="T41402">
    <property type="entry name" value="T41402"/>
</dbReference>
<dbReference type="RefSeq" id="NP_587772.3">
    <property type="nucleotide sequence ID" value="NM_001022765.3"/>
</dbReference>
<dbReference type="BioGRID" id="275568">
    <property type="interactions" value="42"/>
</dbReference>
<dbReference type="STRING" id="284812.O74939"/>
<dbReference type="iPTMnet" id="O74939"/>
<dbReference type="PaxDb" id="4896-SPCC553.01c.1"/>
<dbReference type="EnsemblFungi" id="SPCC553.01c.1">
    <property type="protein sequence ID" value="SPCC553.01c.1:pep"/>
    <property type="gene ID" value="SPCC553.01c"/>
</dbReference>
<dbReference type="GeneID" id="2538994"/>
<dbReference type="KEGG" id="spo:2538994"/>
<dbReference type="PomBase" id="SPCC553.01c"/>
<dbReference type="VEuPathDB" id="FungiDB:SPCC553.01c"/>
<dbReference type="eggNOG" id="ENOG502SEDR">
    <property type="taxonomic scope" value="Eukaryota"/>
</dbReference>
<dbReference type="HOGENOM" id="CLU_387406_0_0_1"/>
<dbReference type="InParanoid" id="O74939"/>
<dbReference type="OMA" id="DGTMRFH"/>
<dbReference type="PRO" id="PR:O74939"/>
<dbReference type="Proteomes" id="UP000002485">
    <property type="component" value="Chromosome III"/>
</dbReference>
<dbReference type="GO" id="GO:0005737">
    <property type="term" value="C:cytoplasm"/>
    <property type="evidence" value="ECO:0007005"/>
    <property type="project" value="PomBase"/>
</dbReference>
<dbReference type="GO" id="GO:0044732">
    <property type="term" value="C:mitotic spindle pole body"/>
    <property type="evidence" value="ECO:0007005"/>
    <property type="project" value="PomBase"/>
</dbReference>
<dbReference type="GO" id="GO:0005634">
    <property type="term" value="C:nucleus"/>
    <property type="evidence" value="ECO:0007005"/>
    <property type="project" value="PomBase"/>
</dbReference>
<dbReference type="GO" id="GO:0035861">
    <property type="term" value="C:site of double-strand break"/>
    <property type="evidence" value="ECO:0000314"/>
    <property type="project" value="PomBase"/>
</dbReference>
<dbReference type="GO" id="GO:0006302">
    <property type="term" value="P:double-strand break repair"/>
    <property type="evidence" value="ECO:0000315"/>
    <property type="project" value="PomBase"/>
</dbReference>
<dbReference type="GO" id="GO:0000712">
    <property type="term" value="P:resolution of meiotic recombination intermediates"/>
    <property type="evidence" value="ECO:0000315"/>
    <property type="project" value="PomBase"/>
</dbReference>
<dbReference type="InterPro" id="IPR052800">
    <property type="entry name" value="DNA_Repair_Helicase_ZGRF1"/>
</dbReference>
<dbReference type="InterPro" id="IPR018838">
    <property type="entry name" value="ZGRF1-like_N"/>
</dbReference>
<dbReference type="PANTHER" id="PTHR28535:SF1">
    <property type="entry name" value="PROTEIN ZGRF1"/>
    <property type="match status" value="1"/>
</dbReference>
<dbReference type="PANTHER" id="PTHR28535">
    <property type="entry name" value="ZINC FINGER GRF-TYPE CONTAINING 1"/>
    <property type="match status" value="1"/>
</dbReference>
<dbReference type="Pfam" id="PF10382">
    <property type="entry name" value="ZGRF1-like_N"/>
    <property type="match status" value="1"/>
</dbReference>
<evidence type="ECO:0000256" key="1">
    <source>
        <dbReference type="SAM" id="MobiDB-lite"/>
    </source>
</evidence>
<reference key="1">
    <citation type="journal article" date="2002" name="Nature">
        <title>The genome sequence of Schizosaccharomyces pombe.</title>
        <authorList>
            <person name="Wood V."/>
            <person name="Gwilliam R."/>
            <person name="Rajandream M.A."/>
            <person name="Lyne M.H."/>
            <person name="Lyne R."/>
            <person name="Stewart A."/>
            <person name="Sgouros J.G."/>
            <person name="Peat N."/>
            <person name="Hayles J."/>
            <person name="Baker S.G."/>
            <person name="Basham D."/>
            <person name="Bowman S."/>
            <person name="Brooks K."/>
            <person name="Brown D."/>
            <person name="Brown S."/>
            <person name="Chillingworth T."/>
            <person name="Churcher C.M."/>
            <person name="Collins M."/>
            <person name="Connor R."/>
            <person name="Cronin A."/>
            <person name="Davis P."/>
            <person name="Feltwell T."/>
            <person name="Fraser A."/>
            <person name="Gentles S."/>
            <person name="Goble A."/>
            <person name="Hamlin N."/>
            <person name="Harris D.E."/>
            <person name="Hidalgo J."/>
            <person name="Hodgson G."/>
            <person name="Holroyd S."/>
            <person name="Hornsby T."/>
            <person name="Howarth S."/>
            <person name="Huckle E.J."/>
            <person name="Hunt S."/>
            <person name="Jagels K."/>
            <person name="James K.D."/>
            <person name="Jones L."/>
            <person name="Jones M."/>
            <person name="Leather S."/>
            <person name="McDonald S."/>
            <person name="McLean J."/>
            <person name="Mooney P."/>
            <person name="Moule S."/>
            <person name="Mungall K.L."/>
            <person name="Murphy L.D."/>
            <person name="Niblett D."/>
            <person name="Odell C."/>
            <person name="Oliver K."/>
            <person name="O'Neil S."/>
            <person name="Pearson D."/>
            <person name="Quail M.A."/>
            <person name="Rabbinowitsch E."/>
            <person name="Rutherford K.M."/>
            <person name="Rutter S."/>
            <person name="Saunders D."/>
            <person name="Seeger K."/>
            <person name="Sharp S."/>
            <person name="Skelton J."/>
            <person name="Simmonds M.N."/>
            <person name="Squares R."/>
            <person name="Squares S."/>
            <person name="Stevens K."/>
            <person name="Taylor K."/>
            <person name="Taylor R.G."/>
            <person name="Tivey A."/>
            <person name="Walsh S.V."/>
            <person name="Warren T."/>
            <person name="Whitehead S."/>
            <person name="Woodward J.R."/>
            <person name="Volckaert G."/>
            <person name="Aert R."/>
            <person name="Robben J."/>
            <person name="Grymonprez B."/>
            <person name="Weltjens I."/>
            <person name="Vanstreels E."/>
            <person name="Rieger M."/>
            <person name="Schaefer M."/>
            <person name="Mueller-Auer S."/>
            <person name="Gabel C."/>
            <person name="Fuchs M."/>
            <person name="Duesterhoeft A."/>
            <person name="Fritzc C."/>
            <person name="Holzer E."/>
            <person name="Moestl D."/>
            <person name="Hilbert H."/>
            <person name="Borzym K."/>
            <person name="Langer I."/>
            <person name="Beck A."/>
            <person name="Lehrach H."/>
            <person name="Reinhardt R."/>
            <person name="Pohl T.M."/>
            <person name="Eger P."/>
            <person name="Zimmermann W."/>
            <person name="Wedler H."/>
            <person name="Wambutt R."/>
            <person name="Purnelle B."/>
            <person name="Goffeau A."/>
            <person name="Cadieu E."/>
            <person name="Dreano S."/>
            <person name="Gloux S."/>
            <person name="Lelaure V."/>
            <person name="Mottier S."/>
            <person name="Galibert F."/>
            <person name="Aves S.J."/>
            <person name="Xiang Z."/>
            <person name="Hunt C."/>
            <person name="Moore K."/>
            <person name="Hurst S.M."/>
            <person name="Lucas M."/>
            <person name="Rochet M."/>
            <person name="Gaillardin C."/>
            <person name="Tallada V.A."/>
            <person name="Garzon A."/>
            <person name="Thode G."/>
            <person name="Daga R.R."/>
            <person name="Cruzado L."/>
            <person name="Jimenez J."/>
            <person name="Sanchez M."/>
            <person name="del Rey F."/>
            <person name="Benito J."/>
            <person name="Dominguez A."/>
            <person name="Revuelta J.L."/>
            <person name="Moreno S."/>
            <person name="Armstrong J."/>
            <person name="Forsburg S.L."/>
            <person name="Cerutti L."/>
            <person name="Lowe T."/>
            <person name="McCombie W.R."/>
            <person name="Paulsen I."/>
            <person name="Potashkin J."/>
            <person name="Shpakovski G.V."/>
            <person name="Ussery D."/>
            <person name="Barrell B.G."/>
            <person name="Nurse P."/>
        </authorList>
    </citation>
    <scope>NUCLEOTIDE SEQUENCE [LARGE SCALE GENOMIC DNA]</scope>
    <source>
        <strain>972 / ATCC 24843</strain>
    </source>
</reference>
<organism>
    <name type="scientific">Schizosaccharomyces pombe (strain 972 / ATCC 24843)</name>
    <name type="common">Fission yeast</name>
    <dbReference type="NCBI Taxonomy" id="284812"/>
    <lineage>
        <taxon>Eukaryota</taxon>
        <taxon>Fungi</taxon>
        <taxon>Dikarya</taxon>
        <taxon>Ascomycota</taxon>
        <taxon>Taphrinomycotina</taxon>
        <taxon>Schizosaccharomycetes</taxon>
        <taxon>Schizosaccharomycetales</taxon>
        <taxon>Schizosaccharomycetaceae</taxon>
        <taxon>Schizosaccharomyces</taxon>
    </lineage>
</organism>
<gene>
    <name type="ORF">SPCC553.01c</name>
    <name type="ORF">SPCC736.01c</name>
</gene>
<protein>
    <recommendedName>
        <fullName>Uncharacterized protein C553.01c</fullName>
    </recommendedName>
</protein>